<keyword id="KW-1185">Reference proteome</keyword>
<name>SMG_NEIMB</name>
<accession>P66821</accession>
<accession>Q9JR28</accession>
<organism>
    <name type="scientific">Neisseria meningitidis serogroup B (strain ATCC BAA-335 / MC58)</name>
    <dbReference type="NCBI Taxonomy" id="122586"/>
    <lineage>
        <taxon>Bacteria</taxon>
        <taxon>Pseudomonadati</taxon>
        <taxon>Pseudomonadota</taxon>
        <taxon>Betaproteobacteria</taxon>
        <taxon>Neisseriales</taxon>
        <taxon>Neisseriaceae</taxon>
        <taxon>Neisseria</taxon>
    </lineage>
</organism>
<comment type="similarity">
    <text evidence="1">Belongs to the Smg family.</text>
</comment>
<dbReference type="EMBL" id="AE002098">
    <property type="protein sequence ID" value="AAF40576.1"/>
    <property type="molecule type" value="Genomic_DNA"/>
</dbReference>
<dbReference type="PIR" id="G81236">
    <property type="entry name" value="G81236"/>
</dbReference>
<dbReference type="RefSeq" id="NP_273175.1">
    <property type="nucleotide sequence ID" value="NC_003112.2"/>
</dbReference>
<dbReference type="RefSeq" id="WP_002215351.1">
    <property type="nucleotide sequence ID" value="NC_003112.2"/>
</dbReference>
<dbReference type="SMR" id="P66821"/>
<dbReference type="FunCoup" id="P66821">
    <property type="interactions" value="53"/>
</dbReference>
<dbReference type="STRING" id="122586.NMB0117"/>
<dbReference type="PaxDb" id="122586-NMB0117"/>
<dbReference type="KEGG" id="nme:NMB0117"/>
<dbReference type="PATRIC" id="fig|122586.8.peg.157"/>
<dbReference type="HOGENOM" id="CLU_133242_0_0_4"/>
<dbReference type="InParanoid" id="P66821"/>
<dbReference type="OrthoDB" id="5297467at2"/>
<dbReference type="Proteomes" id="UP000000425">
    <property type="component" value="Chromosome"/>
</dbReference>
<dbReference type="HAMAP" id="MF_00598">
    <property type="entry name" value="Smg"/>
    <property type="match status" value="1"/>
</dbReference>
<dbReference type="InterPro" id="IPR007456">
    <property type="entry name" value="Smg"/>
</dbReference>
<dbReference type="PANTHER" id="PTHR38692">
    <property type="entry name" value="PROTEIN SMG"/>
    <property type="match status" value="1"/>
</dbReference>
<dbReference type="PANTHER" id="PTHR38692:SF1">
    <property type="entry name" value="PROTEIN SMG"/>
    <property type="match status" value="1"/>
</dbReference>
<dbReference type="Pfam" id="PF04361">
    <property type="entry name" value="DUF494"/>
    <property type="match status" value="1"/>
</dbReference>
<proteinExistence type="inferred from homology"/>
<feature type="chain" id="PRO_0000209175" description="Protein Smg homolog">
    <location>
        <begin position="1"/>
        <end position="153"/>
    </location>
</feature>
<protein>
    <recommendedName>
        <fullName evidence="1">Protein Smg homolog</fullName>
    </recommendedName>
</protein>
<sequence length="153" mass="17105">MTEVIAYLIEHFQDFDTCPPPEDLGMLLEEAGFDTMEIGNTLMMMEVLLNSSEFSAEPADSGALRVYSKEETDNLPQEVMGLMQYLIEEKAVSCEQREIIIHALMHIPGDEITVDTAKVLTLLLLWANKSELPVLVGDELMSALLLDNKPTMN</sequence>
<reference key="1">
    <citation type="journal article" date="2000" name="Science">
        <title>Complete genome sequence of Neisseria meningitidis serogroup B strain MC58.</title>
        <authorList>
            <person name="Tettelin H."/>
            <person name="Saunders N.J."/>
            <person name="Heidelberg J.F."/>
            <person name="Jeffries A.C."/>
            <person name="Nelson K.E."/>
            <person name="Eisen J.A."/>
            <person name="Ketchum K.A."/>
            <person name="Hood D.W."/>
            <person name="Peden J.F."/>
            <person name="Dodson R.J."/>
            <person name="Nelson W.C."/>
            <person name="Gwinn M.L."/>
            <person name="DeBoy R.T."/>
            <person name="Peterson J.D."/>
            <person name="Hickey E.K."/>
            <person name="Haft D.H."/>
            <person name="Salzberg S.L."/>
            <person name="White O."/>
            <person name="Fleischmann R.D."/>
            <person name="Dougherty B.A."/>
            <person name="Mason T.M."/>
            <person name="Ciecko A."/>
            <person name="Parksey D.S."/>
            <person name="Blair E."/>
            <person name="Cittone H."/>
            <person name="Clark E.B."/>
            <person name="Cotton M.D."/>
            <person name="Utterback T.R."/>
            <person name="Khouri H.M."/>
            <person name="Qin H."/>
            <person name="Vamathevan J.J."/>
            <person name="Gill J."/>
            <person name="Scarlato V."/>
            <person name="Masignani V."/>
            <person name="Pizza M."/>
            <person name="Grandi G."/>
            <person name="Sun L."/>
            <person name="Smith H.O."/>
            <person name="Fraser C.M."/>
            <person name="Moxon E.R."/>
            <person name="Rappuoli R."/>
            <person name="Venter J.C."/>
        </authorList>
    </citation>
    <scope>NUCLEOTIDE SEQUENCE [LARGE SCALE GENOMIC DNA]</scope>
    <source>
        <strain>ATCC BAA-335 / MC58</strain>
    </source>
</reference>
<evidence type="ECO:0000255" key="1">
    <source>
        <dbReference type="HAMAP-Rule" id="MF_00598"/>
    </source>
</evidence>
<gene>
    <name evidence="1" type="primary">smg</name>
    <name type="ordered locus">NMB0117</name>
</gene>